<gene>
    <name type="primary">yip1</name>
    <name type="ORF">SPCC61.04c</name>
</gene>
<protein>
    <recommendedName>
        <fullName>Protein transport protein yip1</fullName>
    </recommendedName>
</protein>
<sequence length="227" mass="25390">MAYYNNPANLQYYDYSYTADNSFNTQSRAAGFYDEPLHEPLSQGWLAAFSTSGYPGEPSLLEELEINFGHIKQKTTHVLNPFKHVDVHIMDDTDMAGPILFCLLFSTFLSLHGRSHFGYIYGIALLGSLSLHFVLRLMSAKNLFFTRTVSVLGYSLLPLVVIAFFKNIFTFNGIAGYALAALACIWCTYAASAMFVGILQVNNMRFLVAYPIALFYGVFAVITVFSK</sequence>
<dbReference type="EMBL" id="CU329672">
    <property type="protein sequence ID" value="CAA22273.1"/>
    <property type="molecule type" value="Genomic_DNA"/>
</dbReference>
<dbReference type="PIR" id="T41464">
    <property type="entry name" value="T41464"/>
</dbReference>
<dbReference type="RefSeq" id="NP_588195.1">
    <property type="nucleotide sequence ID" value="NM_001023185.2"/>
</dbReference>
<dbReference type="BioGRID" id="275648">
    <property type="interactions" value="3"/>
</dbReference>
<dbReference type="FunCoup" id="O94348">
    <property type="interactions" value="757"/>
</dbReference>
<dbReference type="STRING" id="284812.O94348"/>
<dbReference type="PaxDb" id="4896-SPCC61.04c.1"/>
<dbReference type="EnsemblFungi" id="SPCC61.04c.1">
    <property type="protein sequence ID" value="SPCC61.04c.1:pep"/>
    <property type="gene ID" value="SPCC61.04c"/>
</dbReference>
<dbReference type="KEGG" id="spo:2539076"/>
<dbReference type="PomBase" id="SPCC61.04c"/>
<dbReference type="VEuPathDB" id="FungiDB:SPCC61.04c"/>
<dbReference type="eggNOG" id="KOG3103">
    <property type="taxonomic scope" value="Eukaryota"/>
</dbReference>
<dbReference type="HOGENOM" id="CLU_074741_4_2_1"/>
<dbReference type="InParanoid" id="O94348"/>
<dbReference type="OMA" id="HIRAKSM"/>
<dbReference type="PhylomeDB" id="O94348"/>
<dbReference type="PRO" id="PR:O94348"/>
<dbReference type="Proteomes" id="UP000002485">
    <property type="component" value="Chromosome III"/>
</dbReference>
<dbReference type="GO" id="GO:0005789">
    <property type="term" value="C:endoplasmic reticulum membrane"/>
    <property type="evidence" value="ECO:0000266"/>
    <property type="project" value="PomBase"/>
</dbReference>
<dbReference type="GO" id="GO:0000139">
    <property type="term" value="C:Golgi membrane"/>
    <property type="evidence" value="ECO:0000266"/>
    <property type="project" value="PomBase"/>
</dbReference>
<dbReference type="GO" id="GO:0005802">
    <property type="term" value="C:trans-Golgi network"/>
    <property type="evidence" value="ECO:0000318"/>
    <property type="project" value="GO_Central"/>
</dbReference>
<dbReference type="GO" id="GO:0031267">
    <property type="term" value="F:small GTPase binding"/>
    <property type="evidence" value="ECO:0000255"/>
    <property type="project" value="PomBase"/>
</dbReference>
<dbReference type="GO" id="GO:0006888">
    <property type="term" value="P:endoplasmic reticulum to Golgi vesicle-mediated transport"/>
    <property type="evidence" value="ECO:0000318"/>
    <property type="project" value="GO_Central"/>
</dbReference>
<dbReference type="GO" id="GO:0015031">
    <property type="term" value="P:protein transport"/>
    <property type="evidence" value="ECO:0007669"/>
    <property type="project" value="UniProtKB-KW"/>
</dbReference>
<dbReference type="GO" id="GO:0048280">
    <property type="term" value="P:vesicle fusion with Golgi apparatus"/>
    <property type="evidence" value="ECO:0000318"/>
    <property type="project" value="GO_Central"/>
</dbReference>
<dbReference type="InterPro" id="IPR045231">
    <property type="entry name" value="Yip1/4-like"/>
</dbReference>
<dbReference type="InterPro" id="IPR006977">
    <property type="entry name" value="Yip1_dom"/>
</dbReference>
<dbReference type="PANTHER" id="PTHR21236">
    <property type="entry name" value="GOLGI MEMBRANE PROTEIN YIP1"/>
    <property type="match status" value="1"/>
</dbReference>
<dbReference type="PANTHER" id="PTHR21236:SF2">
    <property type="entry name" value="PROTEIN YIPF"/>
    <property type="match status" value="1"/>
</dbReference>
<dbReference type="Pfam" id="PF04893">
    <property type="entry name" value="Yip1"/>
    <property type="match status" value="1"/>
</dbReference>
<reference key="1">
    <citation type="journal article" date="2002" name="Nature">
        <title>The genome sequence of Schizosaccharomyces pombe.</title>
        <authorList>
            <person name="Wood V."/>
            <person name="Gwilliam R."/>
            <person name="Rajandream M.A."/>
            <person name="Lyne M.H."/>
            <person name="Lyne R."/>
            <person name="Stewart A."/>
            <person name="Sgouros J.G."/>
            <person name="Peat N."/>
            <person name="Hayles J."/>
            <person name="Baker S.G."/>
            <person name="Basham D."/>
            <person name="Bowman S."/>
            <person name="Brooks K."/>
            <person name="Brown D."/>
            <person name="Brown S."/>
            <person name="Chillingworth T."/>
            <person name="Churcher C.M."/>
            <person name="Collins M."/>
            <person name="Connor R."/>
            <person name="Cronin A."/>
            <person name="Davis P."/>
            <person name="Feltwell T."/>
            <person name="Fraser A."/>
            <person name="Gentles S."/>
            <person name="Goble A."/>
            <person name="Hamlin N."/>
            <person name="Harris D.E."/>
            <person name="Hidalgo J."/>
            <person name="Hodgson G."/>
            <person name="Holroyd S."/>
            <person name="Hornsby T."/>
            <person name="Howarth S."/>
            <person name="Huckle E.J."/>
            <person name="Hunt S."/>
            <person name="Jagels K."/>
            <person name="James K.D."/>
            <person name="Jones L."/>
            <person name="Jones M."/>
            <person name="Leather S."/>
            <person name="McDonald S."/>
            <person name="McLean J."/>
            <person name="Mooney P."/>
            <person name="Moule S."/>
            <person name="Mungall K.L."/>
            <person name="Murphy L.D."/>
            <person name="Niblett D."/>
            <person name="Odell C."/>
            <person name="Oliver K."/>
            <person name="O'Neil S."/>
            <person name="Pearson D."/>
            <person name="Quail M.A."/>
            <person name="Rabbinowitsch E."/>
            <person name="Rutherford K.M."/>
            <person name="Rutter S."/>
            <person name="Saunders D."/>
            <person name="Seeger K."/>
            <person name="Sharp S."/>
            <person name="Skelton J."/>
            <person name="Simmonds M.N."/>
            <person name="Squares R."/>
            <person name="Squares S."/>
            <person name="Stevens K."/>
            <person name="Taylor K."/>
            <person name="Taylor R.G."/>
            <person name="Tivey A."/>
            <person name="Walsh S.V."/>
            <person name="Warren T."/>
            <person name="Whitehead S."/>
            <person name="Woodward J.R."/>
            <person name="Volckaert G."/>
            <person name="Aert R."/>
            <person name="Robben J."/>
            <person name="Grymonprez B."/>
            <person name="Weltjens I."/>
            <person name="Vanstreels E."/>
            <person name="Rieger M."/>
            <person name="Schaefer M."/>
            <person name="Mueller-Auer S."/>
            <person name="Gabel C."/>
            <person name="Fuchs M."/>
            <person name="Duesterhoeft A."/>
            <person name="Fritzc C."/>
            <person name="Holzer E."/>
            <person name="Moestl D."/>
            <person name="Hilbert H."/>
            <person name="Borzym K."/>
            <person name="Langer I."/>
            <person name="Beck A."/>
            <person name="Lehrach H."/>
            <person name="Reinhardt R."/>
            <person name="Pohl T.M."/>
            <person name="Eger P."/>
            <person name="Zimmermann W."/>
            <person name="Wedler H."/>
            <person name="Wambutt R."/>
            <person name="Purnelle B."/>
            <person name="Goffeau A."/>
            <person name="Cadieu E."/>
            <person name="Dreano S."/>
            <person name="Gloux S."/>
            <person name="Lelaure V."/>
            <person name="Mottier S."/>
            <person name="Galibert F."/>
            <person name="Aves S.J."/>
            <person name="Xiang Z."/>
            <person name="Hunt C."/>
            <person name="Moore K."/>
            <person name="Hurst S.M."/>
            <person name="Lucas M."/>
            <person name="Rochet M."/>
            <person name="Gaillardin C."/>
            <person name="Tallada V.A."/>
            <person name="Garzon A."/>
            <person name="Thode G."/>
            <person name="Daga R.R."/>
            <person name="Cruzado L."/>
            <person name="Jimenez J."/>
            <person name="Sanchez M."/>
            <person name="del Rey F."/>
            <person name="Benito J."/>
            <person name="Dominguez A."/>
            <person name="Revuelta J.L."/>
            <person name="Moreno S."/>
            <person name="Armstrong J."/>
            <person name="Forsburg S.L."/>
            <person name="Cerutti L."/>
            <person name="Lowe T."/>
            <person name="McCombie W.R."/>
            <person name="Paulsen I."/>
            <person name="Potashkin J."/>
            <person name="Shpakovski G.V."/>
            <person name="Ussery D."/>
            <person name="Barrell B.G."/>
            <person name="Nurse P."/>
        </authorList>
    </citation>
    <scope>NUCLEOTIDE SEQUENCE [LARGE SCALE GENOMIC DNA]</scope>
    <source>
        <strain>972 / ATCC 24843</strain>
    </source>
</reference>
<comment type="function">
    <text evidence="1">Required for fusion of ER-derived vesicles with the Golgi during ER-to-Golgi protein transport, probably by mediating correct membrane localization of ypt1.</text>
</comment>
<comment type="subunit">
    <text evidence="1">Component of the YIP1-YIF1 complex, composed of at least yif1, yip1 and yos1. The complex interacts with the ER to Golgi SNAREs bos1 and sec22. Interacts with the prenylated form of the Rab GTPases ypt1 and ypt3 (By similarity).</text>
</comment>
<comment type="subcellular location">
    <subcellularLocation>
        <location evidence="1">Endoplasmic reticulum membrane</location>
        <topology evidence="1">Multi-pass membrane protein</topology>
    </subcellularLocation>
    <subcellularLocation>
        <location evidence="1">Golgi apparatus membrane</location>
        <topology evidence="1">Multi-pass membrane protein</topology>
    </subcellularLocation>
</comment>
<comment type="similarity">
    <text evidence="3">Belongs to the YIP1 family.</text>
</comment>
<organism>
    <name type="scientific">Schizosaccharomyces pombe (strain 972 / ATCC 24843)</name>
    <name type="common">Fission yeast</name>
    <dbReference type="NCBI Taxonomy" id="284812"/>
    <lineage>
        <taxon>Eukaryota</taxon>
        <taxon>Fungi</taxon>
        <taxon>Dikarya</taxon>
        <taxon>Ascomycota</taxon>
        <taxon>Taphrinomycotina</taxon>
        <taxon>Schizosaccharomycetes</taxon>
        <taxon>Schizosaccharomycetales</taxon>
        <taxon>Schizosaccharomycetaceae</taxon>
        <taxon>Schizosaccharomyces</taxon>
    </lineage>
</organism>
<name>YIP1_SCHPO</name>
<proteinExistence type="inferred from homology"/>
<accession>O94348</accession>
<evidence type="ECO:0000250" key="1"/>
<evidence type="ECO:0000255" key="2"/>
<evidence type="ECO:0000305" key="3"/>
<feature type="chain" id="PRO_0000232732" description="Protein transport protein yip1">
    <location>
        <begin position="1"/>
        <end position="227"/>
    </location>
</feature>
<feature type="topological domain" description="Cytoplasmic" evidence="2">
    <location>
        <begin position="1"/>
        <end position="92"/>
    </location>
</feature>
<feature type="transmembrane region" description="Helical" evidence="2">
    <location>
        <begin position="93"/>
        <end position="113"/>
    </location>
</feature>
<feature type="topological domain" description="Lumenal" evidence="2">
    <location>
        <position position="114"/>
    </location>
</feature>
<feature type="transmembrane region" description="Helical" evidence="2">
    <location>
        <begin position="115"/>
        <end position="135"/>
    </location>
</feature>
<feature type="topological domain" description="Cytoplasmic" evidence="2">
    <location>
        <begin position="136"/>
        <end position="150"/>
    </location>
</feature>
<feature type="transmembrane region" description="Helical" evidence="2">
    <location>
        <begin position="151"/>
        <end position="171"/>
    </location>
</feature>
<feature type="topological domain" description="Lumenal" evidence="2">
    <location>
        <begin position="172"/>
        <end position="178"/>
    </location>
</feature>
<feature type="transmembrane region" description="Helical" evidence="2">
    <location>
        <begin position="179"/>
        <end position="199"/>
    </location>
</feature>
<feature type="topological domain" description="Cytoplasmic" evidence="2">
    <location>
        <begin position="200"/>
        <end position="205"/>
    </location>
</feature>
<feature type="transmembrane region" description="Helical" evidence="2">
    <location>
        <begin position="206"/>
        <end position="226"/>
    </location>
</feature>
<feature type="topological domain" description="Lumenal" evidence="2">
    <location>
        <position position="227"/>
    </location>
</feature>
<keyword id="KW-0256">Endoplasmic reticulum</keyword>
<keyword id="KW-0931">ER-Golgi transport</keyword>
<keyword id="KW-0333">Golgi apparatus</keyword>
<keyword id="KW-0472">Membrane</keyword>
<keyword id="KW-0653">Protein transport</keyword>
<keyword id="KW-1185">Reference proteome</keyword>
<keyword id="KW-0812">Transmembrane</keyword>
<keyword id="KW-1133">Transmembrane helix</keyword>
<keyword id="KW-0813">Transport</keyword>